<organism>
    <name type="scientific">Haemophilus ducreyi (strain 35000HP / ATCC 700724)</name>
    <dbReference type="NCBI Taxonomy" id="233412"/>
    <lineage>
        <taxon>Bacteria</taxon>
        <taxon>Pseudomonadati</taxon>
        <taxon>Pseudomonadota</taxon>
        <taxon>Gammaproteobacteria</taxon>
        <taxon>Pasteurellales</taxon>
        <taxon>Pasteurellaceae</taxon>
        <taxon>Haemophilus</taxon>
    </lineage>
</organism>
<keyword id="KW-0067">ATP-binding</keyword>
<keyword id="KW-0460">Magnesium</keyword>
<keyword id="KW-0511">Multifunctional enzyme</keyword>
<keyword id="KW-0547">Nucleotide-binding</keyword>
<keyword id="KW-0548">Nucleotidyltransferase</keyword>
<keyword id="KW-1185">Reference proteome</keyword>
<keyword id="KW-0808">Transferase</keyword>
<reference key="1">
    <citation type="submission" date="2003-06" db="EMBL/GenBank/DDBJ databases">
        <title>The complete genome sequence of Haemophilus ducreyi.</title>
        <authorList>
            <person name="Munson R.S. Jr."/>
            <person name="Ray W.C."/>
            <person name="Mahairas G."/>
            <person name="Sabo P."/>
            <person name="Mungur R."/>
            <person name="Johnson L."/>
            <person name="Nguyen D."/>
            <person name="Wang J."/>
            <person name="Forst C."/>
            <person name="Hood L."/>
        </authorList>
    </citation>
    <scope>NUCLEOTIDE SEQUENCE [LARGE SCALE GENOMIC DNA]</scope>
    <source>
        <strain>35000HP / ATCC 700724</strain>
    </source>
</reference>
<comment type="function">
    <text evidence="1">Involved in the regulation of glutamine synthetase GlnA, a key enzyme in the process to assimilate ammonia. When cellular nitrogen levels are high, the C-terminal adenylyl transferase (AT) inactivates GlnA by covalent transfer of an adenylyl group from ATP to specific tyrosine residue of GlnA, thus reducing its activity. Conversely, when nitrogen levels are low, the N-terminal adenylyl removase (AR) activates GlnA by removing the adenylyl group by phosphorolysis, increasing its activity. The regulatory region of GlnE binds the signal transduction protein PII (GlnB) which indicates the nitrogen status of the cell.</text>
</comment>
<comment type="catalytic activity">
    <reaction evidence="1">
        <text>[glutamine synthetase]-O(4)-(5'-adenylyl)-L-tyrosine + phosphate = [glutamine synthetase]-L-tyrosine + ADP</text>
        <dbReference type="Rhea" id="RHEA:43716"/>
        <dbReference type="Rhea" id="RHEA-COMP:10660"/>
        <dbReference type="Rhea" id="RHEA-COMP:10661"/>
        <dbReference type="ChEBI" id="CHEBI:43474"/>
        <dbReference type="ChEBI" id="CHEBI:46858"/>
        <dbReference type="ChEBI" id="CHEBI:83624"/>
        <dbReference type="ChEBI" id="CHEBI:456216"/>
        <dbReference type="EC" id="2.7.7.89"/>
    </reaction>
</comment>
<comment type="catalytic activity">
    <reaction evidence="1">
        <text>[glutamine synthetase]-L-tyrosine + ATP = [glutamine synthetase]-O(4)-(5'-adenylyl)-L-tyrosine + diphosphate</text>
        <dbReference type="Rhea" id="RHEA:18589"/>
        <dbReference type="Rhea" id="RHEA-COMP:10660"/>
        <dbReference type="Rhea" id="RHEA-COMP:10661"/>
        <dbReference type="ChEBI" id="CHEBI:30616"/>
        <dbReference type="ChEBI" id="CHEBI:33019"/>
        <dbReference type="ChEBI" id="CHEBI:46858"/>
        <dbReference type="ChEBI" id="CHEBI:83624"/>
        <dbReference type="EC" id="2.7.7.42"/>
    </reaction>
</comment>
<comment type="cofactor">
    <cofactor evidence="1">
        <name>Mg(2+)</name>
        <dbReference type="ChEBI" id="CHEBI:18420"/>
    </cofactor>
</comment>
<comment type="similarity">
    <text evidence="1">Belongs to the GlnE family.</text>
</comment>
<proteinExistence type="inferred from homology"/>
<name>GLNE_HAEDU</name>
<evidence type="ECO:0000255" key="1">
    <source>
        <dbReference type="HAMAP-Rule" id="MF_00802"/>
    </source>
</evidence>
<accession>Q7VKZ4</accession>
<sequence length="957" mass="110400">MFSQLDFTGLPLANTGENRPLAIAVAMSNFVKKTLQKQADLRDDWQRKLPTLADCGNYAERLTIYLSTINDEVQLSHCLRNFRHREMARLSFIQSNKLATVEFVFEQLSDLAEAIILAARDWLFTRCCAEYGTPVNGLGEIQPLLIIGMGKLGGRELNFSSDIDLIFTYPEAGQTVGGHKTIENSKFFTRLGQRLIKALDEITVDGFVYRTDMRLRPFGDNGALVLSFAAMEDYYQEQGRDWERYAMIKAKILGEDLTDVNHRYLQQMLRPFVYRRYLDFSAIQSLREMKQKISREVLRRNLQDNIKLGAGGIREIEFIVQTFQMIRGGRDKILQQRSLLQVLPHLVTLNLLTKQQAKHLGDAYIFHRQLENVLQAIDDQQTQSLPADAKNQARIMYACQSYWQKDQQNQPLMIEYHWQSWQQFLSTLAQHQQHVRVIFNQLIGEEEQANQSPVNEQLAIWQDILHPEIRQLELAEVLRDYPVATEDYATIFHLLANTLQDWSKRPIGVRGRKVLSQLMPKVMHSICSKTDYLVVLPRLLNIIDRVTTRTTYLELLQEKDQILPLLERLCGHSIMVAEQIARYPMLLDEFIINKSLMKVIEFEQYKTELTEYLIRIPEEDEEALIDALRQFKQGHLLRIAVADILGVLPVMKISDHLTYLAAAIISEVVNMAWKSLVKRFGKPTHLAEDERGFAVIAYGKLGGLELGYNSDLDLVFLHNAPLEGETSGRRSISNHQFYLKLAQKINSIFNLNTSAGVLYEVDMRLRPSGDAGLLVSTFQAYQYYQQHEAWTWETQALVRGRCVYGSASLIDEFSRIRRTTLCLARTRGRLRQEISQMRHKMYQHLTKTSTGQFNLKTDQGGITDIEFIAQSIVLEYAHCYPEMAKWSDNVRIFTAAIECGILSQHIGEGLKNAYTRIRNRIHQLNLLQLPSIVNDTEFVSERAFVTKIWQQIFTDNE</sequence>
<feature type="chain" id="PRO_0000209248" description="Bifunctional glutamine synthetase adenylyltransferase/adenylyl-removing enzyme">
    <location>
        <begin position="1"/>
        <end position="957"/>
    </location>
</feature>
<feature type="region of interest" description="Adenylyl removase" evidence="1">
    <location>
        <begin position="1"/>
        <end position="447"/>
    </location>
</feature>
<feature type="region of interest" description="Adenylyl transferase" evidence="1">
    <location>
        <begin position="454"/>
        <end position="957"/>
    </location>
</feature>
<protein>
    <recommendedName>
        <fullName evidence="1">Bifunctional glutamine synthetase adenylyltransferase/adenylyl-removing enzyme</fullName>
    </recommendedName>
    <alternativeName>
        <fullName evidence="1">ATP:glutamine synthetase adenylyltransferase</fullName>
    </alternativeName>
    <alternativeName>
        <fullName evidence="1">ATase</fullName>
    </alternativeName>
    <domain>
        <recommendedName>
            <fullName evidence="1">Glutamine synthetase adenylyl-L-tyrosine phosphorylase</fullName>
            <ecNumber evidence="1">2.7.7.89</ecNumber>
        </recommendedName>
        <alternativeName>
            <fullName evidence="1">Adenylyl removase</fullName>
            <shortName evidence="1">AR</shortName>
            <shortName evidence="1">AT-N</shortName>
        </alternativeName>
    </domain>
    <domain>
        <recommendedName>
            <fullName evidence="1">Glutamine synthetase adenylyl transferase</fullName>
            <ecNumber evidence="1">2.7.7.42</ecNumber>
        </recommendedName>
        <alternativeName>
            <fullName evidence="1">Adenylyl transferase</fullName>
            <shortName evidence="1">AT</shortName>
            <shortName evidence="1">AT-C</shortName>
        </alternativeName>
    </domain>
</protein>
<dbReference type="EC" id="2.7.7.89" evidence="1"/>
<dbReference type="EC" id="2.7.7.42" evidence="1"/>
<dbReference type="EMBL" id="AE017143">
    <property type="protein sequence ID" value="AAP96469.1"/>
    <property type="molecule type" value="Genomic_DNA"/>
</dbReference>
<dbReference type="RefSeq" id="WP_010945498.1">
    <property type="nucleotide sequence ID" value="NC_002940.2"/>
</dbReference>
<dbReference type="SMR" id="Q7VKZ4"/>
<dbReference type="STRING" id="233412.HD_1709"/>
<dbReference type="KEGG" id="hdu:HD_1709"/>
<dbReference type="eggNOG" id="COG1391">
    <property type="taxonomic scope" value="Bacteria"/>
</dbReference>
<dbReference type="HOGENOM" id="CLU_006233_0_1_6"/>
<dbReference type="OrthoDB" id="9759366at2"/>
<dbReference type="Proteomes" id="UP000001022">
    <property type="component" value="Chromosome"/>
</dbReference>
<dbReference type="GO" id="GO:0005829">
    <property type="term" value="C:cytosol"/>
    <property type="evidence" value="ECO:0007669"/>
    <property type="project" value="TreeGrafter"/>
</dbReference>
<dbReference type="GO" id="GO:0008882">
    <property type="term" value="F:[glutamate-ammonia-ligase] adenylyltransferase activity"/>
    <property type="evidence" value="ECO:0007669"/>
    <property type="project" value="UniProtKB-UniRule"/>
</dbReference>
<dbReference type="GO" id="GO:0047388">
    <property type="term" value="F:[glutamine synthetase]-adenylyl-L-tyrosine phosphorylase activity"/>
    <property type="evidence" value="ECO:0007669"/>
    <property type="project" value="UniProtKB-EC"/>
</dbReference>
<dbReference type="GO" id="GO:0005524">
    <property type="term" value="F:ATP binding"/>
    <property type="evidence" value="ECO:0007669"/>
    <property type="project" value="UniProtKB-UniRule"/>
</dbReference>
<dbReference type="GO" id="GO:0000287">
    <property type="term" value="F:magnesium ion binding"/>
    <property type="evidence" value="ECO:0007669"/>
    <property type="project" value="UniProtKB-UniRule"/>
</dbReference>
<dbReference type="GO" id="GO:0000820">
    <property type="term" value="P:regulation of glutamine family amino acid metabolic process"/>
    <property type="evidence" value="ECO:0007669"/>
    <property type="project" value="UniProtKB-UniRule"/>
</dbReference>
<dbReference type="CDD" id="cd05401">
    <property type="entry name" value="NT_GlnE_GlnD_like"/>
    <property type="match status" value="2"/>
</dbReference>
<dbReference type="FunFam" id="1.20.120.330:FF:000005">
    <property type="entry name" value="Bifunctional glutamine synthetase adenylyltransferase/adenylyl-removing enzyme"/>
    <property type="match status" value="1"/>
</dbReference>
<dbReference type="FunFam" id="3.30.460.10:FF:000009">
    <property type="entry name" value="Bifunctional glutamine synthetase adenylyltransferase/adenylyl-removing enzyme"/>
    <property type="match status" value="1"/>
</dbReference>
<dbReference type="FunFam" id="3.30.460.10:FF:000014">
    <property type="entry name" value="Bifunctional glutamine synthetase adenylyltransferase/adenylyl-removing enzyme"/>
    <property type="match status" value="1"/>
</dbReference>
<dbReference type="Gene3D" id="1.20.120.1510">
    <property type="match status" value="1"/>
</dbReference>
<dbReference type="Gene3D" id="3.30.460.10">
    <property type="entry name" value="Beta Polymerase, domain 2"/>
    <property type="match status" value="2"/>
</dbReference>
<dbReference type="Gene3D" id="1.10.4050.10">
    <property type="entry name" value="Glutamine synthase adenylyltransferase GlnE"/>
    <property type="match status" value="1"/>
</dbReference>
<dbReference type="Gene3D" id="1.20.120.330">
    <property type="entry name" value="Nucleotidyltransferases domain 2"/>
    <property type="match status" value="2"/>
</dbReference>
<dbReference type="HAMAP" id="MF_00802">
    <property type="entry name" value="GlnE"/>
    <property type="match status" value="1"/>
</dbReference>
<dbReference type="InterPro" id="IPR023057">
    <property type="entry name" value="GlnE"/>
</dbReference>
<dbReference type="InterPro" id="IPR005190">
    <property type="entry name" value="GlnE_rpt_dom"/>
</dbReference>
<dbReference type="InterPro" id="IPR043519">
    <property type="entry name" value="NT_sf"/>
</dbReference>
<dbReference type="InterPro" id="IPR013546">
    <property type="entry name" value="PII_UdlTrfase/GS_AdlTrfase"/>
</dbReference>
<dbReference type="NCBIfam" id="NF008292">
    <property type="entry name" value="PRK11072.1"/>
    <property type="match status" value="1"/>
</dbReference>
<dbReference type="PANTHER" id="PTHR30621:SF0">
    <property type="entry name" value="BIFUNCTIONAL GLUTAMINE SYNTHETASE ADENYLYLTRANSFERASE_ADENYLYL-REMOVING ENZYME"/>
    <property type="match status" value="1"/>
</dbReference>
<dbReference type="PANTHER" id="PTHR30621">
    <property type="entry name" value="GLUTAMINE SYNTHETASE ADENYLYLTRANSFERASE"/>
    <property type="match status" value="1"/>
</dbReference>
<dbReference type="Pfam" id="PF08335">
    <property type="entry name" value="GlnD_UR_UTase"/>
    <property type="match status" value="2"/>
</dbReference>
<dbReference type="Pfam" id="PF03710">
    <property type="entry name" value="GlnE"/>
    <property type="match status" value="2"/>
</dbReference>
<dbReference type="SUPFAM" id="SSF81301">
    <property type="entry name" value="Nucleotidyltransferase"/>
    <property type="match status" value="2"/>
</dbReference>
<dbReference type="SUPFAM" id="SSF81593">
    <property type="entry name" value="Nucleotidyltransferase substrate binding subunit/domain"/>
    <property type="match status" value="2"/>
</dbReference>
<gene>
    <name evidence="1" type="primary">glnE</name>
    <name type="ordered locus">HD_1709</name>
</gene>